<reference key="1">
    <citation type="journal article" date="2007" name="BMC Microbiol.">
        <title>Subtle genetic changes enhance virulence of methicillin resistant and sensitive Staphylococcus aureus.</title>
        <authorList>
            <person name="Highlander S.K."/>
            <person name="Hulten K.G."/>
            <person name="Qin X."/>
            <person name="Jiang H."/>
            <person name="Yerrapragada S."/>
            <person name="Mason E.O. Jr."/>
            <person name="Shang Y."/>
            <person name="Williams T.M."/>
            <person name="Fortunov R.M."/>
            <person name="Liu Y."/>
            <person name="Igboeli O."/>
            <person name="Petrosino J."/>
            <person name="Tirumalai M."/>
            <person name="Uzman A."/>
            <person name="Fox G.E."/>
            <person name="Cardenas A.M."/>
            <person name="Muzny D.M."/>
            <person name="Hemphill L."/>
            <person name="Ding Y."/>
            <person name="Dugan S."/>
            <person name="Blyth P.R."/>
            <person name="Buhay C.J."/>
            <person name="Dinh H.H."/>
            <person name="Hawes A.C."/>
            <person name="Holder M."/>
            <person name="Kovar C.L."/>
            <person name="Lee S.L."/>
            <person name="Liu W."/>
            <person name="Nazareth L.V."/>
            <person name="Wang Q."/>
            <person name="Zhou J."/>
            <person name="Kaplan S.L."/>
            <person name="Weinstock G.M."/>
        </authorList>
    </citation>
    <scope>NUCLEOTIDE SEQUENCE [LARGE SCALE GENOMIC DNA]</scope>
    <source>
        <strain>USA300 / TCH1516</strain>
    </source>
</reference>
<accession>A8YYC6</accession>
<feature type="chain" id="PRO_1000087782" description="Phosphoglucosamine mutase">
    <location>
        <begin position="1"/>
        <end position="451"/>
    </location>
</feature>
<feature type="active site" description="Phosphoserine intermediate" evidence="1">
    <location>
        <position position="102"/>
    </location>
</feature>
<feature type="binding site" description="via phosphate group" evidence="1">
    <location>
        <position position="102"/>
    </location>
    <ligand>
        <name>Mg(2+)</name>
        <dbReference type="ChEBI" id="CHEBI:18420"/>
    </ligand>
</feature>
<feature type="binding site" evidence="1">
    <location>
        <position position="242"/>
    </location>
    <ligand>
        <name>Mg(2+)</name>
        <dbReference type="ChEBI" id="CHEBI:18420"/>
    </ligand>
</feature>
<feature type="binding site" evidence="1">
    <location>
        <position position="244"/>
    </location>
    <ligand>
        <name>Mg(2+)</name>
        <dbReference type="ChEBI" id="CHEBI:18420"/>
    </ligand>
</feature>
<feature type="binding site" evidence="1">
    <location>
        <position position="246"/>
    </location>
    <ligand>
        <name>Mg(2+)</name>
        <dbReference type="ChEBI" id="CHEBI:18420"/>
    </ligand>
</feature>
<feature type="modified residue" description="Phosphoserine" evidence="1">
    <location>
        <position position="102"/>
    </location>
</feature>
<sequence length="451" mass="49266">MGKYFGTDGVRGVANQELTPELAFKLGRYGGYVLAHNKGEKHPRVLVGRDTRVSGEMLESALIAGLISIGAEVMRLGIISTPGVAYLTRDMGAELGVMISASHNPVADNGIKFFGSDGFKLSDEQENEIEALLDQENPELPRPVGNDIVHYSDYFEGAQKYLSYLKSTVDVNFEGLKIALDGANGSTSSLAPFLFGDLEADTETIGCSPDGYNINEKCGSTHPEKLAEKVVETESDFGLAFDGDGDRIIAVDENGQIVDGDQIMFIIGQEMHKNQELNNDMIVSTVMSNLGFYKALEQEGIKSNKTKVGDRYVVEEMRRGNYNLGGEQSGHIVMMDYNTTGDGLLTGIQLASVIKMTGKSLSELAGQMKKYPQSLINVRVTDKYRVEENVDVKEVMTKVEVEMNGEGRILVRPSGTEPLVRVMVEAATDEDAERFAQQIADVVQDKMGLDK</sequence>
<keyword id="KW-0413">Isomerase</keyword>
<keyword id="KW-0460">Magnesium</keyword>
<keyword id="KW-0479">Metal-binding</keyword>
<keyword id="KW-0597">Phosphoprotein</keyword>
<protein>
    <recommendedName>
        <fullName evidence="1">Phosphoglucosamine mutase</fullName>
        <ecNumber evidence="1">5.4.2.10</ecNumber>
    </recommendedName>
</protein>
<gene>
    <name evidence="1" type="primary">glmM</name>
    <name type="ordered locus">USA300HOU_2151</name>
</gene>
<dbReference type="EC" id="5.4.2.10" evidence="1"/>
<dbReference type="EMBL" id="CP000730">
    <property type="protein sequence ID" value="ABX30146.1"/>
    <property type="molecule type" value="Genomic_DNA"/>
</dbReference>
<dbReference type="RefSeq" id="WP_000521491.1">
    <property type="nucleotide sequence ID" value="NC_010079.1"/>
</dbReference>
<dbReference type="SMR" id="A8YYC6"/>
<dbReference type="KEGG" id="sax:USA300HOU_2151"/>
<dbReference type="HOGENOM" id="CLU_016950_7_0_9"/>
<dbReference type="GO" id="GO:0005829">
    <property type="term" value="C:cytosol"/>
    <property type="evidence" value="ECO:0007669"/>
    <property type="project" value="TreeGrafter"/>
</dbReference>
<dbReference type="GO" id="GO:0000287">
    <property type="term" value="F:magnesium ion binding"/>
    <property type="evidence" value="ECO:0007669"/>
    <property type="project" value="UniProtKB-UniRule"/>
</dbReference>
<dbReference type="GO" id="GO:0008966">
    <property type="term" value="F:phosphoglucosamine mutase activity"/>
    <property type="evidence" value="ECO:0007669"/>
    <property type="project" value="UniProtKB-UniRule"/>
</dbReference>
<dbReference type="GO" id="GO:0004615">
    <property type="term" value="F:phosphomannomutase activity"/>
    <property type="evidence" value="ECO:0007669"/>
    <property type="project" value="TreeGrafter"/>
</dbReference>
<dbReference type="GO" id="GO:0005975">
    <property type="term" value="P:carbohydrate metabolic process"/>
    <property type="evidence" value="ECO:0007669"/>
    <property type="project" value="InterPro"/>
</dbReference>
<dbReference type="GO" id="GO:0009252">
    <property type="term" value="P:peptidoglycan biosynthetic process"/>
    <property type="evidence" value="ECO:0007669"/>
    <property type="project" value="TreeGrafter"/>
</dbReference>
<dbReference type="GO" id="GO:0006048">
    <property type="term" value="P:UDP-N-acetylglucosamine biosynthetic process"/>
    <property type="evidence" value="ECO:0007669"/>
    <property type="project" value="TreeGrafter"/>
</dbReference>
<dbReference type="CDD" id="cd05802">
    <property type="entry name" value="GlmM"/>
    <property type="match status" value="1"/>
</dbReference>
<dbReference type="FunFam" id="3.30.310.50:FF:000001">
    <property type="entry name" value="Phosphoglucosamine mutase"/>
    <property type="match status" value="1"/>
</dbReference>
<dbReference type="FunFam" id="3.40.120.10:FF:000001">
    <property type="entry name" value="Phosphoglucosamine mutase"/>
    <property type="match status" value="1"/>
</dbReference>
<dbReference type="FunFam" id="3.40.120.10:FF:000002">
    <property type="entry name" value="Phosphoglucosamine mutase"/>
    <property type="match status" value="1"/>
</dbReference>
<dbReference type="Gene3D" id="3.40.120.10">
    <property type="entry name" value="Alpha-D-Glucose-1,6-Bisphosphate, subunit A, domain 3"/>
    <property type="match status" value="3"/>
</dbReference>
<dbReference type="Gene3D" id="3.30.310.50">
    <property type="entry name" value="Alpha-D-phosphohexomutase, C-terminal domain"/>
    <property type="match status" value="1"/>
</dbReference>
<dbReference type="HAMAP" id="MF_01554_B">
    <property type="entry name" value="GlmM_B"/>
    <property type="match status" value="1"/>
</dbReference>
<dbReference type="InterPro" id="IPR005844">
    <property type="entry name" value="A-D-PHexomutase_a/b/a-I"/>
</dbReference>
<dbReference type="InterPro" id="IPR016055">
    <property type="entry name" value="A-D-PHexomutase_a/b/a-I/II/III"/>
</dbReference>
<dbReference type="InterPro" id="IPR005845">
    <property type="entry name" value="A-D-PHexomutase_a/b/a-II"/>
</dbReference>
<dbReference type="InterPro" id="IPR005846">
    <property type="entry name" value="A-D-PHexomutase_a/b/a-III"/>
</dbReference>
<dbReference type="InterPro" id="IPR005843">
    <property type="entry name" value="A-D-PHexomutase_C"/>
</dbReference>
<dbReference type="InterPro" id="IPR036900">
    <property type="entry name" value="A-D-PHexomutase_C_sf"/>
</dbReference>
<dbReference type="InterPro" id="IPR016066">
    <property type="entry name" value="A-D-PHexomutase_CS"/>
</dbReference>
<dbReference type="InterPro" id="IPR005841">
    <property type="entry name" value="Alpha-D-phosphohexomutase_SF"/>
</dbReference>
<dbReference type="InterPro" id="IPR006352">
    <property type="entry name" value="GlmM_bact"/>
</dbReference>
<dbReference type="InterPro" id="IPR050060">
    <property type="entry name" value="Phosphoglucosamine_mutase"/>
</dbReference>
<dbReference type="NCBIfam" id="TIGR01455">
    <property type="entry name" value="glmM"/>
    <property type="match status" value="1"/>
</dbReference>
<dbReference type="NCBIfam" id="NF008139">
    <property type="entry name" value="PRK10887.1"/>
    <property type="match status" value="1"/>
</dbReference>
<dbReference type="PANTHER" id="PTHR42946:SF1">
    <property type="entry name" value="PHOSPHOGLUCOMUTASE (ALPHA-D-GLUCOSE-1,6-BISPHOSPHATE-DEPENDENT)"/>
    <property type="match status" value="1"/>
</dbReference>
<dbReference type="PANTHER" id="PTHR42946">
    <property type="entry name" value="PHOSPHOHEXOSE MUTASE"/>
    <property type="match status" value="1"/>
</dbReference>
<dbReference type="Pfam" id="PF02878">
    <property type="entry name" value="PGM_PMM_I"/>
    <property type="match status" value="1"/>
</dbReference>
<dbReference type="Pfam" id="PF02879">
    <property type="entry name" value="PGM_PMM_II"/>
    <property type="match status" value="1"/>
</dbReference>
<dbReference type="Pfam" id="PF02880">
    <property type="entry name" value="PGM_PMM_III"/>
    <property type="match status" value="1"/>
</dbReference>
<dbReference type="Pfam" id="PF00408">
    <property type="entry name" value="PGM_PMM_IV"/>
    <property type="match status" value="1"/>
</dbReference>
<dbReference type="PRINTS" id="PR00509">
    <property type="entry name" value="PGMPMM"/>
</dbReference>
<dbReference type="SUPFAM" id="SSF55957">
    <property type="entry name" value="Phosphoglucomutase, C-terminal domain"/>
    <property type="match status" value="1"/>
</dbReference>
<dbReference type="SUPFAM" id="SSF53738">
    <property type="entry name" value="Phosphoglucomutase, first 3 domains"/>
    <property type="match status" value="3"/>
</dbReference>
<dbReference type="PROSITE" id="PS00710">
    <property type="entry name" value="PGM_PMM"/>
    <property type="match status" value="1"/>
</dbReference>
<organism>
    <name type="scientific">Staphylococcus aureus (strain USA300 / TCH1516)</name>
    <dbReference type="NCBI Taxonomy" id="451516"/>
    <lineage>
        <taxon>Bacteria</taxon>
        <taxon>Bacillati</taxon>
        <taxon>Bacillota</taxon>
        <taxon>Bacilli</taxon>
        <taxon>Bacillales</taxon>
        <taxon>Staphylococcaceae</taxon>
        <taxon>Staphylococcus</taxon>
    </lineage>
</organism>
<proteinExistence type="inferred from homology"/>
<comment type="function">
    <text evidence="1">Catalyzes the conversion of glucosamine-6-phosphate to glucosamine-1-phosphate.</text>
</comment>
<comment type="catalytic activity">
    <reaction evidence="1">
        <text>alpha-D-glucosamine 1-phosphate = D-glucosamine 6-phosphate</text>
        <dbReference type="Rhea" id="RHEA:23424"/>
        <dbReference type="ChEBI" id="CHEBI:58516"/>
        <dbReference type="ChEBI" id="CHEBI:58725"/>
        <dbReference type="EC" id="5.4.2.10"/>
    </reaction>
</comment>
<comment type="cofactor">
    <cofactor evidence="1">
        <name>Mg(2+)</name>
        <dbReference type="ChEBI" id="CHEBI:18420"/>
    </cofactor>
    <text evidence="1">Binds 1 Mg(2+) ion per subunit.</text>
</comment>
<comment type="PTM">
    <text evidence="1">Activated by phosphorylation.</text>
</comment>
<comment type="similarity">
    <text evidence="1">Belongs to the phosphohexose mutase family.</text>
</comment>
<name>GLMM_STAAT</name>
<evidence type="ECO:0000255" key="1">
    <source>
        <dbReference type="HAMAP-Rule" id="MF_01554"/>
    </source>
</evidence>